<comment type="function">
    <text evidence="1">Sequence-specific transcription factor which is part of a developmental regulatory system that provides cells with specific positional identities on the anterior-posterior axis. Binds the consensus region 5'-TTAAT[GT][GA]-3'. This homeotic protein controls development of the cells in the posterior thoracic and first abdominal segments. It activates the synthesis of the decapentaplegic (DPP) growth factor (By similarity).</text>
</comment>
<comment type="subcellular location">
    <subcellularLocation>
        <location>Nucleus</location>
    </subcellularLocation>
</comment>
<comment type="alternative products">
    <event type="alternative splicing"/>
    <isoform>
        <id>Q24703-1</id>
        <name>IB</name>
        <sequence type="displayed"/>
    </isoform>
    <isoform>
        <id>Q24703-2</id>
        <name>IA</name>
        <sequence type="described" ref="VSP_002410"/>
    </isoform>
    <isoform>
        <id>Q24703-3</id>
        <name>IIA</name>
        <sequence type="described" ref="VSP_002411"/>
    </isoform>
    <isoform>
        <id>Q24703-4</id>
        <name>IIB</name>
        <sequence type="described" ref="VSP_002413"/>
    </isoform>
    <isoform>
        <id>Q24703-5</id>
        <name>IVA</name>
        <sequence type="described" ref="VSP_002412"/>
    </isoform>
</comment>
<comment type="tissue specificity">
    <text evidence="2">In the embryo, expression is seen in the epidermis, somatic and visceral mesoderm, and the peripheral and central nervous system.</text>
</comment>
<comment type="similarity">
    <text evidence="3">Belongs to the Antp homeobox family.</text>
</comment>
<name>UBX_DROVI</name>
<gene>
    <name type="primary">Ubx</name>
</gene>
<accession>Q24703</accession>
<proteinExistence type="evidence at transcript level"/>
<protein>
    <recommendedName>
        <fullName>Homeotic protein ultrabithorax</fullName>
    </recommendedName>
</protein>
<keyword id="KW-0010">Activator</keyword>
<keyword id="KW-0025">Alternative splicing</keyword>
<keyword id="KW-0217">Developmental protein</keyword>
<keyword id="KW-0238">DNA-binding</keyword>
<keyword id="KW-0371">Homeobox</keyword>
<keyword id="KW-0539">Nucleus</keyword>
<keyword id="KW-0678">Repressor</keyword>
<keyword id="KW-0804">Transcription</keyword>
<keyword id="KW-0805">Transcription regulation</keyword>
<feature type="chain" id="PRO_0000200271" description="Homeotic protein ultrabithorax">
    <location>
        <begin position="1" status="less than"/>
        <end position="87" status="greater than"/>
    </location>
</feature>
<feature type="short sequence motif" description="Antp-type hexapeptide">
    <location>
        <begin position="22"/>
        <end position="27"/>
    </location>
</feature>
<feature type="splice variant" id="VSP_002412" description="In isoform IVA." evidence="3">
    <location>
        <begin position="30"/>
        <end position="72"/>
    </location>
</feature>
<feature type="splice variant" id="VSP_002411" description="In isoform IIA." evidence="3">
    <location>
        <begin position="30"/>
        <end position="55"/>
    </location>
</feature>
<feature type="splice variant" id="VSP_002410" description="In isoform IA." evidence="3">
    <location>
        <begin position="30"/>
        <end position="38"/>
    </location>
</feature>
<feature type="splice variant" id="VSP_002413" description="In isoform IIB." evidence="3">
    <location>
        <begin position="39"/>
        <end position="55"/>
    </location>
</feature>
<feature type="non-terminal residue">
    <location>
        <position position="1"/>
    </location>
</feature>
<feature type="non-terminal residue">
    <location>
        <position position="87"/>
    </location>
</feature>
<dbReference type="EMBL" id="U03180">
    <property type="protein sequence ID" value="AAA03570.1"/>
    <property type="molecule type" value="mRNA"/>
</dbReference>
<dbReference type="EnsemblMetazoa" id="FBtr0433957">
    <property type="protein sequence ID" value="FBpp0391059"/>
    <property type="gene ID" value="FBgn0013100"/>
</dbReference>
<dbReference type="EnsemblMetazoa" id="XM_015171980.2">
    <property type="protein sequence ID" value="XP_015027466.1"/>
    <property type="gene ID" value="LOC6631129"/>
</dbReference>
<dbReference type="OrthoDB" id="6159439at2759"/>
<dbReference type="ChiTaRS" id="Ubx">
    <property type="organism name" value="fly"/>
</dbReference>
<dbReference type="GO" id="GO:0005634">
    <property type="term" value="C:nucleus"/>
    <property type="evidence" value="ECO:0007669"/>
    <property type="project" value="UniProtKB-SubCell"/>
</dbReference>
<dbReference type="GO" id="GO:0003677">
    <property type="term" value="F:DNA binding"/>
    <property type="evidence" value="ECO:0000304"/>
    <property type="project" value="UniProtKB"/>
</dbReference>
<dbReference type="GO" id="GO:0003700">
    <property type="term" value="F:DNA-binding transcription factor activity"/>
    <property type="evidence" value="ECO:0007669"/>
    <property type="project" value="InterPro"/>
</dbReference>
<dbReference type="InterPro" id="IPR001827">
    <property type="entry name" value="Homeobox_Antennapedia_CS"/>
</dbReference>
<dbReference type="PROSITE" id="PS00032">
    <property type="entry name" value="ANTENNAPEDIA"/>
    <property type="match status" value="1"/>
</dbReference>
<evidence type="ECO:0000250" key="1"/>
<evidence type="ECO:0000269" key="2">
    <source>
    </source>
</evidence>
<evidence type="ECO:0000305" key="3"/>
<reference key="1">
    <citation type="journal article" date="1994" name="Genetics">
        <title>Evolutionary conservation of the structure and expression of alternatively spliced Ultrabithorax isoforms from Drosophila.</title>
        <authorList>
            <person name="Bomze H.M."/>
            <person name="Lopez A.J."/>
        </authorList>
    </citation>
    <scope>NUCLEOTIDE SEQUENCE [MRNA]</scope>
    <scope>ALTERNATIVE SPLICING</scope>
    <scope>TISSUE SPECIFICITY</scope>
    <source>
        <tissue>Embryo</tissue>
    </source>
</reference>
<sequence length="87" mass="9307">SGAAAAQTAAASSLHQASNHTFYPWMAIAGESTADPSKSKIRSDLTQYGGISTDMGKRYSESLAGSLLPDWLGTNGLRRRGRQTYTR</sequence>
<organism>
    <name type="scientific">Drosophila virilis</name>
    <name type="common">Fruit fly</name>
    <dbReference type="NCBI Taxonomy" id="7244"/>
    <lineage>
        <taxon>Eukaryota</taxon>
        <taxon>Metazoa</taxon>
        <taxon>Ecdysozoa</taxon>
        <taxon>Arthropoda</taxon>
        <taxon>Hexapoda</taxon>
        <taxon>Insecta</taxon>
        <taxon>Pterygota</taxon>
        <taxon>Neoptera</taxon>
        <taxon>Endopterygota</taxon>
        <taxon>Diptera</taxon>
        <taxon>Brachycera</taxon>
        <taxon>Muscomorpha</taxon>
        <taxon>Ephydroidea</taxon>
        <taxon>Drosophilidae</taxon>
        <taxon>Drosophila</taxon>
    </lineage>
</organism>